<dbReference type="EMBL" id="BC114204">
    <property type="protein sequence ID" value="AAI14205.1"/>
    <property type="molecule type" value="mRNA"/>
</dbReference>
<dbReference type="RefSeq" id="NP_001070571.1">
    <property type="nucleotide sequence ID" value="NM_001077103.1"/>
</dbReference>
<dbReference type="FunCoup" id="Q24JX9">
    <property type="interactions" value="27"/>
</dbReference>
<dbReference type="STRING" id="9913.ENSBTAP00000053894"/>
<dbReference type="PaxDb" id="9913-ENSBTAP00000053894"/>
<dbReference type="Ensembl" id="ENSBTAT00000064111.2">
    <property type="protein sequence ID" value="ENSBTAP00000053894.1"/>
    <property type="gene ID" value="ENSBTAG00000054927.1"/>
</dbReference>
<dbReference type="GeneID" id="768045"/>
<dbReference type="KEGG" id="bta:768045"/>
<dbReference type="CTD" id="85293"/>
<dbReference type="VEuPathDB" id="HostDB:ENSBTAG00000054927"/>
<dbReference type="eggNOG" id="KOG4726">
    <property type="taxonomic scope" value="Eukaryota"/>
</dbReference>
<dbReference type="GeneTree" id="ENSGT00390000001157"/>
<dbReference type="HOGENOM" id="CLU_2359185_0_0_1"/>
<dbReference type="InParanoid" id="Q24JX9"/>
<dbReference type="OMA" id="PCIPRNC"/>
<dbReference type="OrthoDB" id="9446960at2759"/>
<dbReference type="TreeFam" id="TF338042"/>
<dbReference type="Reactome" id="R-BTA-6805567">
    <property type="pathway name" value="Keratinization"/>
</dbReference>
<dbReference type="Proteomes" id="UP000009136">
    <property type="component" value="Chromosome 19"/>
</dbReference>
<dbReference type="GO" id="GO:0005829">
    <property type="term" value="C:cytosol"/>
    <property type="evidence" value="ECO:0007669"/>
    <property type="project" value="UniProtKB-ARBA"/>
</dbReference>
<dbReference type="GO" id="GO:0045095">
    <property type="term" value="C:keratin filament"/>
    <property type="evidence" value="ECO:0007669"/>
    <property type="project" value="InterPro"/>
</dbReference>
<dbReference type="GO" id="GO:0005198">
    <property type="term" value="F:structural molecule activity"/>
    <property type="evidence" value="ECO:0007669"/>
    <property type="project" value="InterPro"/>
</dbReference>
<dbReference type="InterPro" id="IPR007659">
    <property type="entry name" value="Keratin_matx"/>
</dbReference>
<dbReference type="PANTHER" id="PTHR23260">
    <property type="entry name" value="KERATIN ASSOCIATED PROTEIN 3-3-RELATED"/>
    <property type="match status" value="1"/>
</dbReference>
<dbReference type="PANTHER" id="PTHR23260:SF1">
    <property type="entry name" value="KERATIN-ASSOCIATED PROTEIN 3-3"/>
    <property type="match status" value="1"/>
</dbReference>
<dbReference type="Pfam" id="PF04579">
    <property type="entry name" value="Keratin_matx"/>
    <property type="match status" value="1"/>
</dbReference>
<feature type="initiator methionine" description="Removed" evidence="2">
    <location>
        <position position="1"/>
    </location>
</feature>
<feature type="chain" id="PRO_0000358597" description="Keratin-associated protein 3-3">
    <location>
        <begin position="2"/>
        <end position="98"/>
    </location>
</feature>
<feature type="repeat" description="1" evidence="4">
    <location>
        <begin position="3"/>
        <end position="7"/>
    </location>
</feature>
<feature type="repeat" description="2" evidence="4">
    <location>
        <begin position="8"/>
        <end position="12"/>
    </location>
</feature>
<feature type="repeat" description="3" evidence="4">
    <location>
        <begin position="47"/>
        <end position="51"/>
    </location>
</feature>
<feature type="region of interest" description="3 X 5 AA repeats of C-C-X(3)" evidence="4">
    <location>
        <begin position="3"/>
        <end position="59"/>
    </location>
</feature>
<feature type="modified residue" description="N-acetylalanine" evidence="2">
    <location>
        <position position="2"/>
    </location>
</feature>
<accession>Q24JX9</accession>
<gene>
    <name evidence="5" type="primary">KRTAP3-3</name>
</gene>
<keyword id="KW-0007">Acetylation</keyword>
<keyword id="KW-0416">Keratin</keyword>
<keyword id="KW-1185">Reference proteome</keyword>
<keyword id="KW-0677">Repeat</keyword>
<proteinExistence type="inferred from homology"/>
<evidence type="ECO:0000250" key="1"/>
<evidence type="ECO:0000250" key="2">
    <source>
        <dbReference type="UniProtKB" id="P02444"/>
    </source>
</evidence>
<evidence type="ECO:0000250" key="3">
    <source>
        <dbReference type="UniProtKB" id="Q9BYR6"/>
    </source>
</evidence>
<evidence type="ECO:0000255" key="4"/>
<evidence type="ECO:0000312" key="5">
    <source>
        <dbReference type="EMBL" id="AAI14205.1"/>
    </source>
</evidence>
<name>KRA33_BOVIN</name>
<protein>
    <recommendedName>
        <fullName evidence="5">Keratin-associated protein 3-3</fullName>
    </recommendedName>
</protein>
<organism>
    <name type="scientific">Bos taurus</name>
    <name type="common">Bovine</name>
    <dbReference type="NCBI Taxonomy" id="9913"/>
    <lineage>
        <taxon>Eukaryota</taxon>
        <taxon>Metazoa</taxon>
        <taxon>Chordata</taxon>
        <taxon>Craniata</taxon>
        <taxon>Vertebrata</taxon>
        <taxon>Euteleostomi</taxon>
        <taxon>Mammalia</taxon>
        <taxon>Eutheria</taxon>
        <taxon>Laurasiatheria</taxon>
        <taxon>Artiodactyla</taxon>
        <taxon>Ruminantia</taxon>
        <taxon>Pecora</taxon>
        <taxon>Bovidae</taxon>
        <taxon>Bovinae</taxon>
        <taxon>Bos</taxon>
    </lineage>
</organism>
<sequence>MACCAPLCCSARTSPATTICSSDKFCRCGVCLPSTCPHTVWLLEPTCCDNCPPPCHIPQPCVPTCFLLNSSQPTPGLETINLTTYTQPSCEPCIPSCC</sequence>
<comment type="function">
    <text evidence="1">In the hair cortex, hair keratin intermediate filaments are embedded in an interfilamentous matrix, consisting of hair keratin-associated proteins (KRTAP), which are essential for the formation of a rigid and resistant hair shaft through their extensive disulfide bond cross-linking with abundant cysteine residues of hair keratins. The matrix proteins include the high-sulfur and high-glycine-tyrosine keratins (By similarity).</text>
</comment>
<comment type="subunit">
    <text evidence="1">Interacts with hair keratins.</text>
</comment>
<comment type="similarity">
    <text evidence="3">Belongs to the KRTAP type 3 family.</text>
</comment>
<reference evidence="5" key="1">
    <citation type="submission" date="2006-02" db="EMBL/GenBank/DDBJ databases">
        <authorList>
            <consortium name="NIH - Mammalian Gene Collection (MGC) project"/>
        </authorList>
    </citation>
    <scope>NUCLEOTIDE SEQUENCE [LARGE SCALE MRNA]</scope>
    <source>
        <strain evidence="5">Hereford</strain>
        <tissue evidence="5">Fetal skin</tissue>
    </source>
</reference>